<gene>
    <name evidence="1" type="primary">tyrS</name>
    <name type="ordered locus">Rsph17029_1155</name>
</gene>
<comment type="function">
    <text evidence="1">Catalyzes the attachment of tyrosine to tRNA(Tyr) in a two-step reaction: tyrosine is first activated by ATP to form Tyr-AMP and then transferred to the acceptor end of tRNA(Tyr).</text>
</comment>
<comment type="catalytic activity">
    <reaction evidence="1">
        <text>tRNA(Tyr) + L-tyrosine + ATP = L-tyrosyl-tRNA(Tyr) + AMP + diphosphate + H(+)</text>
        <dbReference type="Rhea" id="RHEA:10220"/>
        <dbReference type="Rhea" id="RHEA-COMP:9706"/>
        <dbReference type="Rhea" id="RHEA-COMP:9707"/>
        <dbReference type="ChEBI" id="CHEBI:15378"/>
        <dbReference type="ChEBI" id="CHEBI:30616"/>
        <dbReference type="ChEBI" id="CHEBI:33019"/>
        <dbReference type="ChEBI" id="CHEBI:58315"/>
        <dbReference type="ChEBI" id="CHEBI:78442"/>
        <dbReference type="ChEBI" id="CHEBI:78536"/>
        <dbReference type="ChEBI" id="CHEBI:456215"/>
        <dbReference type="EC" id="6.1.1.1"/>
    </reaction>
</comment>
<comment type="subunit">
    <text evidence="1">Homodimer.</text>
</comment>
<comment type="subcellular location">
    <subcellularLocation>
        <location evidence="1">Cytoplasm</location>
    </subcellularLocation>
</comment>
<comment type="similarity">
    <text evidence="1">Belongs to the class-I aminoacyl-tRNA synthetase family. TyrS type 1 subfamily.</text>
</comment>
<feature type="chain" id="PRO_1000088611" description="Tyrosine--tRNA ligase">
    <location>
        <begin position="1"/>
        <end position="416"/>
    </location>
</feature>
<feature type="domain" description="S4 RNA-binding" evidence="1">
    <location>
        <begin position="351"/>
        <end position="416"/>
    </location>
</feature>
<feature type="short sequence motif" description="'HIGH' region">
    <location>
        <begin position="45"/>
        <end position="54"/>
    </location>
</feature>
<feature type="short sequence motif" description="'KMSKS' region">
    <location>
        <begin position="237"/>
        <end position="241"/>
    </location>
</feature>
<feature type="binding site" evidence="1">
    <location>
        <position position="40"/>
    </location>
    <ligand>
        <name>L-tyrosine</name>
        <dbReference type="ChEBI" id="CHEBI:58315"/>
    </ligand>
</feature>
<feature type="binding site" evidence="1">
    <location>
        <position position="177"/>
    </location>
    <ligand>
        <name>L-tyrosine</name>
        <dbReference type="ChEBI" id="CHEBI:58315"/>
    </ligand>
</feature>
<feature type="binding site" evidence="1">
    <location>
        <position position="181"/>
    </location>
    <ligand>
        <name>L-tyrosine</name>
        <dbReference type="ChEBI" id="CHEBI:58315"/>
    </ligand>
</feature>
<feature type="binding site" evidence="1">
    <location>
        <position position="240"/>
    </location>
    <ligand>
        <name>ATP</name>
        <dbReference type="ChEBI" id="CHEBI:30616"/>
    </ligand>
</feature>
<name>SYY_CERS1</name>
<protein>
    <recommendedName>
        <fullName evidence="1">Tyrosine--tRNA ligase</fullName>
        <ecNumber evidence="1">6.1.1.1</ecNumber>
    </recommendedName>
    <alternativeName>
        <fullName evidence="1">Tyrosyl-tRNA synthetase</fullName>
        <shortName evidence="1">TyrRS</shortName>
    </alternativeName>
</protein>
<sequence>MTYHPKSDFLRVMQERGYLADCTDMQALDEALSNGVVPAYIGYDATAASLHVGHLLNIMMLRWLQKTGHKPITLMGGGTTKVGDPSFRSEERPLLTPDRIDENIEGMRKVFARYLSYGEGATDALMLNNAEWLDQLNYLDFLRDIGRHFSVNRMLSFESVKSRLDREQSLSFLEFNYMILQAYDFLELFRRTGCRLQMGGSDQWGNIVNGIDLTRRVLEGEIFGLTSPLLTTSDGRKMGKSAGGAVWLNGEMLAPYDFWQFWRNTTDADVGRFLKLYTELPVEECDRLGALQGSEINAAKILLANEVTTLLHGRDAAEAAEATARAVFEEGGVGGALEVVELPAATLGDGLSVAHFLVAAGLVASGKEAKRLVAENGLRFNNEPVGDANAPVTAATVGEELKVSIGRKKHKLVRLS</sequence>
<keyword id="KW-0030">Aminoacyl-tRNA synthetase</keyword>
<keyword id="KW-0067">ATP-binding</keyword>
<keyword id="KW-0963">Cytoplasm</keyword>
<keyword id="KW-0436">Ligase</keyword>
<keyword id="KW-0547">Nucleotide-binding</keyword>
<keyword id="KW-0648">Protein biosynthesis</keyword>
<keyword id="KW-0694">RNA-binding</keyword>
<accession>A3PIU9</accession>
<proteinExistence type="inferred from homology"/>
<dbReference type="EC" id="6.1.1.1" evidence="1"/>
<dbReference type="EMBL" id="CP000577">
    <property type="protein sequence ID" value="ABN76265.1"/>
    <property type="molecule type" value="Genomic_DNA"/>
</dbReference>
<dbReference type="RefSeq" id="WP_011840838.1">
    <property type="nucleotide sequence ID" value="NC_009049.1"/>
</dbReference>
<dbReference type="SMR" id="A3PIU9"/>
<dbReference type="KEGG" id="rsh:Rsph17029_1155"/>
<dbReference type="HOGENOM" id="CLU_024003_0_3_5"/>
<dbReference type="GO" id="GO:0005829">
    <property type="term" value="C:cytosol"/>
    <property type="evidence" value="ECO:0007669"/>
    <property type="project" value="TreeGrafter"/>
</dbReference>
<dbReference type="GO" id="GO:0005524">
    <property type="term" value="F:ATP binding"/>
    <property type="evidence" value="ECO:0007669"/>
    <property type="project" value="UniProtKB-UniRule"/>
</dbReference>
<dbReference type="GO" id="GO:0003723">
    <property type="term" value="F:RNA binding"/>
    <property type="evidence" value="ECO:0007669"/>
    <property type="project" value="UniProtKB-KW"/>
</dbReference>
<dbReference type="GO" id="GO:0004831">
    <property type="term" value="F:tyrosine-tRNA ligase activity"/>
    <property type="evidence" value="ECO:0007669"/>
    <property type="project" value="UniProtKB-UniRule"/>
</dbReference>
<dbReference type="GO" id="GO:0006437">
    <property type="term" value="P:tyrosyl-tRNA aminoacylation"/>
    <property type="evidence" value="ECO:0007669"/>
    <property type="project" value="UniProtKB-UniRule"/>
</dbReference>
<dbReference type="CDD" id="cd00805">
    <property type="entry name" value="TyrRS_core"/>
    <property type="match status" value="1"/>
</dbReference>
<dbReference type="FunFam" id="1.10.240.10:FF:000001">
    <property type="entry name" value="Tyrosine--tRNA ligase"/>
    <property type="match status" value="1"/>
</dbReference>
<dbReference type="FunFam" id="3.40.50.620:FF:000008">
    <property type="entry name" value="Tyrosine--tRNA ligase"/>
    <property type="match status" value="1"/>
</dbReference>
<dbReference type="Gene3D" id="3.40.50.620">
    <property type="entry name" value="HUPs"/>
    <property type="match status" value="1"/>
</dbReference>
<dbReference type="Gene3D" id="3.10.290.10">
    <property type="entry name" value="RNA-binding S4 domain"/>
    <property type="match status" value="1"/>
</dbReference>
<dbReference type="Gene3D" id="1.10.240.10">
    <property type="entry name" value="Tyrosyl-Transfer RNA Synthetase"/>
    <property type="match status" value="1"/>
</dbReference>
<dbReference type="HAMAP" id="MF_02006">
    <property type="entry name" value="Tyr_tRNA_synth_type1"/>
    <property type="match status" value="1"/>
</dbReference>
<dbReference type="InterPro" id="IPR002305">
    <property type="entry name" value="aa-tRNA-synth_Ic"/>
</dbReference>
<dbReference type="InterPro" id="IPR014729">
    <property type="entry name" value="Rossmann-like_a/b/a_fold"/>
</dbReference>
<dbReference type="InterPro" id="IPR036986">
    <property type="entry name" value="S4_RNA-bd_sf"/>
</dbReference>
<dbReference type="InterPro" id="IPR002307">
    <property type="entry name" value="Tyr-tRNA-ligase"/>
</dbReference>
<dbReference type="InterPro" id="IPR024088">
    <property type="entry name" value="Tyr-tRNA-ligase_bac-type"/>
</dbReference>
<dbReference type="InterPro" id="IPR024107">
    <property type="entry name" value="Tyr-tRNA-ligase_bac_1"/>
</dbReference>
<dbReference type="NCBIfam" id="TIGR00234">
    <property type="entry name" value="tyrS"/>
    <property type="match status" value="1"/>
</dbReference>
<dbReference type="PANTHER" id="PTHR11766:SF0">
    <property type="entry name" value="TYROSINE--TRNA LIGASE, MITOCHONDRIAL"/>
    <property type="match status" value="1"/>
</dbReference>
<dbReference type="PANTHER" id="PTHR11766">
    <property type="entry name" value="TYROSYL-TRNA SYNTHETASE"/>
    <property type="match status" value="1"/>
</dbReference>
<dbReference type="Pfam" id="PF00579">
    <property type="entry name" value="tRNA-synt_1b"/>
    <property type="match status" value="1"/>
</dbReference>
<dbReference type="PRINTS" id="PR01040">
    <property type="entry name" value="TRNASYNTHTYR"/>
</dbReference>
<dbReference type="SUPFAM" id="SSF55174">
    <property type="entry name" value="Alpha-L RNA-binding motif"/>
    <property type="match status" value="1"/>
</dbReference>
<dbReference type="SUPFAM" id="SSF52374">
    <property type="entry name" value="Nucleotidylyl transferase"/>
    <property type="match status" value="1"/>
</dbReference>
<dbReference type="PROSITE" id="PS50889">
    <property type="entry name" value="S4"/>
    <property type="match status" value="1"/>
</dbReference>
<reference key="1">
    <citation type="submission" date="2007-02" db="EMBL/GenBank/DDBJ databases">
        <title>Complete sequence of chromosome 1 of Rhodobacter sphaeroides ATCC 17029.</title>
        <authorList>
            <person name="Copeland A."/>
            <person name="Lucas S."/>
            <person name="Lapidus A."/>
            <person name="Barry K."/>
            <person name="Detter J.C."/>
            <person name="Glavina del Rio T."/>
            <person name="Hammon N."/>
            <person name="Israni S."/>
            <person name="Dalin E."/>
            <person name="Tice H."/>
            <person name="Pitluck S."/>
            <person name="Kiss H."/>
            <person name="Brettin T."/>
            <person name="Bruce D."/>
            <person name="Han C."/>
            <person name="Tapia R."/>
            <person name="Gilna P."/>
            <person name="Schmutz J."/>
            <person name="Larimer F."/>
            <person name="Land M."/>
            <person name="Hauser L."/>
            <person name="Kyrpides N."/>
            <person name="Mikhailova N."/>
            <person name="Richardson P."/>
            <person name="Mackenzie C."/>
            <person name="Choudhary M."/>
            <person name="Donohue T.J."/>
            <person name="Kaplan S."/>
        </authorList>
    </citation>
    <scope>NUCLEOTIDE SEQUENCE [LARGE SCALE GENOMIC DNA]</scope>
    <source>
        <strain>ATCC 17029 / ATH 2.4.9</strain>
    </source>
</reference>
<organism>
    <name type="scientific">Cereibacter sphaeroides (strain ATCC 17029 / ATH 2.4.9)</name>
    <name type="common">Rhodobacter sphaeroides</name>
    <dbReference type="NCBI Taxonomy" id="349101"/>
    <lineage>
        <taxon>Bacteria</taxon>
        <taxon>Pseudomonadati</taxon>
        <taxon>Pseudomonadota</taxon>
        <taxon>Alphaproteobacteria</taxon>
        <taxon>Rhodobacterales</taxon>
        <taxon>Paracoccaceae</taxon>
        <taxon>Cereibacter</taxon>
    </lineage>
</organism>
<evidence type="ECO:0000255" key="1">
    <source>
        <dbReference type="HAMAP-Rule" id="MF_02006"/>
    </source>
</evidence>